<reference key="1">
    <citation type="journal article" date="2004" name="Nature">
        <title>Genome evolution in yeasts.</title>
        <authorList>
            <person name="Dujon B."/>
            <person name="Sherman D."/>
            <person name="Fischer G."/>
            <person name="Durrens P."/>
            <person name="Casaregola S."/>
            <person name="Lafontaine I."/>
            <person name="de Montigny J."/>
            <person name="Marck C."/>
            <person name="Neuveglise C."/>
            <person name="Talla E."/>
            <person name="Goffard N."/>
            <person name="Frangeul L."/>
            <person name="Aigle M."/>
            <person name="Anthouard V."/>
            <person name="Babour A."/>
            <person name="Barbe V."/>
            <person name="Barnay S."/>
            <person name="Blanchin S."/>
            <person name="Beckerich J.-M."/>
            <person name="Beyne E."/>
            <person name="Bleykasten C."/>
            <person name="Boisrame A."/>
            <person name="Boyer J."/>
            <person name="Cattolico L."/>
            <person name="Confanioleri F."/>
            <person name="de Daruvar A."/>
            <person name="Despons L."/>
            <person name="Fabre E."/>
            <person name="Fairhead C."/>
            <person name="Ferry-Dumazet H."/>
            <person name="Groppi A."/>
            <person name="Hantraye F."/>
            <person name="Hennequin C."/>
            <person name="Jauniaux N."/>
            <person name="Joyet P."/>
            <person name="Kachouri R."/>
            <person name="Kerrest A."/>
            <person name="Koszul R."/>
            <person name="Lemaire M."/>
            <person name="Lesur I."/>
            <person name="Ma L."/>
            <person name="Muller H."/>
            <person name="Nicaud J.-M."/>
            <person name="Nikolski M."/>
            <person name="Oztas S."/>
            <person name="Ozier-Kalogeropoulos O."/>
            <person name="Pellenz S."/>
            <person name="Potier S."/>
            <person name="Richard G.-F."/>
            <person name="Straub M.-L."/>
            <person name="Suleau A."/>
            <person name="Swennen D."/>
            <person name="Tekaia F."/>
            <person name="Wesolowski-Louvel M."/>
            <person name="Westhof E."/>
            <person name="Wirth B."/>
            <person name="Zeniou-Meyer M."/>
            <person name="Zivanovic Y."/>
            <person name="Bolotin-Fukuhara M."/>
            <person name="Thierry A."/>
            <person name="Bouchier C."/>
            <person name="Caudron B."/>
            <person name="Scarpelli C."/>
            <person name="Gaillardin C."/>
            <person name="Weissenbach J."/>
            <person name="Wincker P."/>
            <person name="Souciet J.-L."/>
        </authorList>
    </citation>
    <scope>NUCLEOTIDE SEQUENCE [LARGE SCALE GENOMIC DNA]</scope>
    <source>
        <strain>ATCC 8585 / CBS 2359 / DSM 70799 / NBRC 1267 / NRRL Y-1140 / WM37</strain>
    </source>
</reference>
<evidence type="ECO:0000255" key="1">
    <source>
        <dbReference type="HAMAP-Rule" id="MF_03013"/>
    </source>
</evidence>
<evidence type="ECO:0000255" key="2">
    <source>
        <dbReference type="PROSITE-ProRule" id="PRU01167"/>
    </source>
</evidence>
<evidence type="ECO:0000256" key="3">
    <source>
        <dbReference type="SAM" id="MobiDB-lite"/>
    </source>
</evidence>
<feature type="chain" id="PRO_0000366405" description="Clustered mitochondria protein homolog">
    <location>
        <begin position="1"/>
        <end position="1269"/>
    </location>
</feature>
<feature type="domain" description="Clu" evidence="2">
    <location>
        <begin position="297"/>
        <end position="552"/>
    </location>
</feature>
<feature type="repeat" description="TPR 1">
    <location>
        <begin position="1020"/>
        <end position="1053"/>
    </location>
</feature>
<feature type="repeat" description="TPR 2">
    <location>
        <begin position="1147"/>
        <end position="1180"/>
    </location>
</feature>
<feature type="region of interest" description="Disordered" evidence="3">
    <location>
        <begin position="958"/>
        <end position="989"/>
    </location>
</feature>
<feature type="region of interest" description="Disordered" evidence="3">
    <location>
        <begin position="1211"/>
        <end position="1269"/>
    </location>
</feature>
<feature type="compositionally biased region" description="Basic and acidic residues" evidence="3">
    <location>
        <begin position="958"/>
        <end position="969"/>
    </location>
</feature>
<feature type="compositionally biased region" description="Polar residues" evidence="3">
    <location>
        <begin position="1213"/>
        <end position="1223"/>
    </location>
</feature>
<feature type="compositionally biased region" description="Basic residues" evidence="3">
    <location>
        <begin position="1258"/>
        <end position="1269"/>
    </location>
</feature>
<gene>
    <name evidence="1" type="primary">CLU1</name>
    <name evidence="1" type="synonym">TIF31</name>
    <name type="ordered locus">KLLA0F25322g</name>
</gene>
<name>CLU_KLULA</name>
<protein>
    <recommendedName>
        <fullName evidence="1">Clustered mitochondria protein homolog</fullName>
    </recommendedName>
    <alternativeName>
        <fullName evidence="1">Protein TIF31 homolog</fullName>
    </alternativeName>
</protein>
<comment type="function">
    <text evidence="1">mRNA-binding protein involved in proper cytoplasmic distribution of mitochondria.</text>
</comment>
<comment type="subunit">
    <text evidence="1">May associate with the eukaryotic translation initiation factor 3 (eIF-3) complex.</text>
</comment>
<comment type="subcellular location">
    <subcellularLocation>
        <location evidence="1">Cytoplasm</location>
    </subcellularLocation>
</comment>
<comment type="similarity">
    <text evidence="1">Belongs to the CLU family.</text>
</comment>
<sequence length="1269" mass="143418">MSADNIEVIVKGTPSYTKSKNSDIKYQLGKESNVSHLRTFLSFEESTKFYTSYDLIENSRVVDDEDVLGDLAGNGSSLTFQFKPKAYNLVTAVQHIVGLRETLGFSSELEDGISEFAISSGSQFQDMSLEPNSEKSNGSETTISDQEKVKFLQTCNELLESTNTDFNIASLKTGNLLVTPVLKSLHFSAYNPVPAFYKNKGHLLYLQASTLENETFHITTSISGFYVNKSSSVKFDPSPKDEFEPKFNLIDLLTQVSKKFHQHVTSLRNKLSSTDSAQYVKPASCFLSKPWLVSQLPSNNGDFMRTQLEHFNNDDERNFCDEFQAIKDLEINSSYDRLKNEKITAGLIHEFNSEAVKGAMAIFNNELTPIDPGTTGENAVYFHKSLIFSFVADVSGTYSSIGGNEAAYAVANQDLQIINSLNRLGLKGIRHCLTAIIDYAGHRLLVQSPVPGLLTPVGVNIIVDEEDKEVAEPMETLISVNYGYDDFVATLKFDEKFHEKVCEFSKNFYLKEHKVEEVDLRISSKSKGIFGVDQRAYILDLANTNPVDIEFVKAHYDDVKENKYPHRQVLLRRELVERWRAEKIAASGKTLQEASEDVSFIYNPDAYVIDGVEDENVADMSKFLNDTVLTLFLEDILKGNSNIPYDGQHLTDLFHTNGVNMRYLGKAIEFVKAKYEDQKQERAKYLSKIEQENKEYQDWETGYLVKVEKLIKERQEEINKYVQQGKEVPSKLKEQIQLDKADLKEPVRNEGCTVEVDQFEGLIAVCELEMIARSIKHIFRQQSKKLSSPTLVPHLVAFFLNLLFGKSYNESVTVENLDALFDINELEFAQYTREQLIEEVRVQAKLRFRYDLTSEWFDINEKRFSKYALIRAIAQKFGIQLINKEYFFTKEQYEKWKQAQDKKLRSKIVDPKQTFSINDFSLRPVIKGAEFQSLIAEELWIQGASLVNAVSVEEEEAEKKKEESKKAAADGEDAGSSGATSKEEEQAKERAKKMNEALTLLGQSIAFREDIFGLVHPSLVSSYLLLSNMYSRLGQYSQAVTFCNKAALLSERCYGVDSFETVRILSNLAYLEYGQGSIYNSALVLKKVHELLKLLAPFVHSGRVNVFNLLFQIAASTEDKKVQIKILNKLSELLLKITGSEETLPYGQNESRIANLYTSLDDMSHALSHIEKAKSIFSKELGLNDQTTLTSKQWSETIKGIITKQQQEKKLASAQQATKPANISQKKGKKSSSSSPALTNKSVDELLQFIEGPGASKSSKKSKKKHTKN</sequence>
<proteinExistence type="inferred from homology"/>
<accession>Q6CIN0</accession>
<dbReference type="EMBL" id="CR382126">
    <property type="protein sequence ID" value="CAG98917.1"/>
    <property type="molecule type" value="Genomic_DNA"/>
</dbReference>
<dbReference type="RefSeq" id="XP_456209.1">
    <property type="nucleotide sequence ID" value="XM_456209.1"/>
</dbReference>
<dbReference type="SMR" id="Q6CIN0"/>
<dbReference type="FunCoup" id="Q6CIN0">
    <property type="interactions" value="1104"/>
</dbReference>
<dbReference type="STRING" id="284590.Q6CIN0"/>
<dbReference type="PaxDb" id="284590-Q6CIN0"/>
<dbReference type="KEGG" id="kla:KLLA0_F25322g"/>
<dbReference type="eggNOG" id="KOG1839">
    <property type="taxonomic scope" value="Eukaryota"/>
</dbReference>
<dbReference type="HOGENOM" id="CLU_003256_2_0_1"/>
<dbReference type="InParanoid" id="Q6CIN0"/>
<dbReference type="OMA" id="HPVWDKD"/>
<dbReference type="Proteomes" id="UP000000598">
    <property type="component" value="Chromosome F"/>
</dbReference>
<dbReference type="GO" id="GO:0005737">
    <property type="term" value="C:cytoplasm"/>
    <property type="evidence" value="ECO:0007669"/>
    <property type="project" value="UniProtKB-SubCell"/>
</dbReference>
<dbReference type="GO" id="GO:0003729">
    <property type="term" value="F:mRNA binding"/>
    <property type="evidence" value="ECO:0007669"/>
    <property type="project" value="TreeGrafter"/>
</dbReference>
<dbReference type="GO" id="GO:0048312">
    <property type="term" value="P:intracellular distribution of mitochondria"/>
    <property type="evidence" value="ECO:0007669"/>
    <property type="project" value="TreeGrafter"/>
</dbReference>
<dbReference type="GO" id="GO:0007005">
    <property type="term" value="P:mitochondrion organization"/>
    <property type="evidence" value="ECO:0007669"/>
    <property type="project" value="UniProtKB-UniRule"/>
</dbReference>
<dbReference type="CDD" id="cd15466">
    <property type="entry name" value="CLU-central"/>
    <property type="match status" value="1"/>
</dbReference>
<dbReference type="FunFam" id="3.30.2280.10:FF:000002">
    <property type="entry name" value="Clustered mitochondria protein homolog"/>
    <property type="match status" value="1"/>
</dbReference>
<dbReference type="Gene3D" id="3.30.2280.10">
    <property type="entry name" value="Hypothetical protein (hspc210)"/>
    <property type="match status" value="1"/>
</dbReference>
<dbReference type="Gene3D" id="1.25.40.10">
    <property type="entry name" value="Tetratricopeptide repeat domain"/>
    <property type="match status" value="1"/>
</dbReference>
<dbReference type="HAMAP" id="MF_03013">
    <property type="entry name" value="CLU"/>
    <property type="match status" value="1"/>
</dbReference>
<dbReference type="InterPro" id="IPR033646">
    <property type="entry name" value="CLU-central"/>
</dbReference>
<dbReference type="InterPro" id="IPR025697">
    <property type="entry name" value="CLU_dom"/>
</dbReference>
<dbReference type="InterPro" id="IPR028275">
    <property type="entry name" value="CLU_N"/>
</dbReference>
<dbReference type="InterPro" id="IPR027523">
    <property type="entry name" value="CLU_prot"/>
</dbReference>
<dbReference type="InterPro" id="IPR023231">
    <property type="entry name" value="GSKIP_dom_sf"/>
</dbReference>
<dbReference type="InterPro" id="IPR011990">
    <property type="entry name" value="TPR-like_helical_dom_sf"/>
</dbReference>
<dbReference type="PANTHER" id="PTHR12601:SF6">
    <property type="entry name" value="CLUSTERED MITOCHONDRIA PROTEIN HOMOLOG"/>
    <property type="match status" value="1"/>
</dbReference>
<dbReference type="PANTHER" id="PTHR12601">
    <property type="entry name" value="EUKARYOTIC TRANSLATION INITIATION FACTOR 3 SUBUNIT EIF-3"/>
    <property type="match status" value="1"/>
</dbReference>
<dbReference type="Pfam" id="PF13236">
    <property type="entry name" value="CLU"/>
    <property type="match status" value="1"/>
</dbReference>
<dbReference type="Pfam" id="PF15044">
    <property type="entry name" value="CLU_N"/>
    <property type="match status" value="1"/>
</dbReference>
<dbReference type="Pfam" id="PF12807">
    <property type="entry name" value="eIF3_p135"/>
    <property type="match status" value="1"/>
</dbReference>
<dbReference type="Pfam" id="PF13374">
    <property type="entry name" value="TPR_10"/>
    <property type="match status" value="1"/>
</dbReference>
<dbReference type="SUPFAM" id="SSF103107">
    <property type="entry name" value="Hypothetical protein c14orf129, hspc210"/>
    <property type="match status" value="1"/>
</dbReference>
<dbReference type="SUPFAM" id="SSF48452">
    <property type="entry name" value="TPR-like"/>
    <property type="match status" value="1"/>
</dbReference>
<dbReference type="PROSITE" id="PS51823">
    <property type="entry name" value="CLU"/>
    <property type="match status" value="1"/>
</dbReference>
<organism>
    <name type="scientific">Kluyveromyces lactis (strain ATCC 8585 / CBS 2359 / DSM 70799 / NBRC 1267 / NRRL Y-1140 / WM37)</name>
    <name type="common">Yeast</name>
    <name type="synonym">Candida sphaerica</name>
    <dbReference type="NCBI Taxonomy" id="284590"/>
    <lineage>
        <taxon>Eukaryota</taxon>
        <taxon>Fungi</taxon>
        <taxon>Dikarya</taxon>
        <taxon>Ascomycota</taxon>
        <taxon>Saccharomycotina</taxon>
        <taxon>Saccharomycetes</taxon>
        <taxon>Saccharomycetales</taxon>
        <taxon>Saccharomycetaceae</taxon>
        <taxon>Kluyveromyces</taxon>
    </lineage>
</organism>
<keyword id="KW-0963">Cytoplasm</keyword>
<keyword id="KW-1185">Reference proteome</keyword>
<keyword id="KW-0677">Repeat</keyword>
<keyword id="KW-0802">TPR repeat</keyword>